<dbReference type="EC" id="1.5.1.3"/>
<dbReference type="EMBL" id="U10186">
    <property type="protein sequence ID" value="AAA68493.1"/>
    <property type="molecule type" value="Genomic_DNA"/>
</dbReference>
<dbReference type="PIR" id="I60308">
    <property type="entry name" value="I60308"/>
</dbReference>
<dbReference type="RefSeq" id="YP_001569075.1">
    <property type="nucleotide sequence ID" value="NC_010064.1"/>
</dbReference>
<dbReference type="SMR" id="P0ABQ7"/>
<dbReference type="KEGG" id="ag:AAA68493"/>
<dbReference type="UniPathway" id="UPA00077">
    <property type="reaction ID" value="UER00158"/>
</dbReference>
<dbReference type="GO" id="GO:0005829">
    <property type="term" value="C:cytosol"/>
    <property type="evidence" value="ECO:0007669"/>
    <property type="project" value="TreeGrafter"/>
</dbReference>
<dbReference type="GO" id="GO:0004146">
    <property type="term" value="F:dihydrofolate reductase activity"/>
    <property type="evidence" value="ECO:0007669"/>
    <property type="project" value="UniProtKB-EC"/>
</dbReference>
<dbReference type="GO" id="GO:0050661">
    <property type="term" value="F:NADP binding"/>
    <property type="evidence" value="ECO:0007669"/>
    <property type="project" value="InterPro"/>
</dbReference>
<dbReference type="GO" id="GO:0046452">
    <property type="term" value="P:dihydrofolate metabolic process"/>
    <property type="evidence" value="ECO:0007669"/>
    <property type="project" value="TreeGrafter"/>
</dbReference>
<dbReference type="GO" id="GO:0046655">
    <property type="term" value="P:folic acid metabolic process"/>
    <property type="evidence" value="ECO:0007669"/>
    <property type="project" value="TreeGrafter"/>
</dbReference>
<dbReference type="GO" id="GO:0006730">
    <property type="term" value="P:one-carbon metabolic process"/>
    <property type="evidence" value="ECO:0007669"/>
    <property type="project" value="UniProtKB-KW"/>
</dbReference>
<dbReference type="GO" id="GO:0046677">
    <property type="term" value="P:response to antibiotic"/>
    <property type="evidence" value="ECO:0007669"/>
    <property type="project" value="UniProtKB-KW"/>
</dbReference>
<dbReference type="GO" id="GO:0031427">
    <property type="term" value="P:response to methotrexate"/>
    <property type="evidence" value="ECO:0007669"/>
    <property type="project" value="UniProtKB-KW"/>
</dbReference>
<dbReference type="GO" id="GO:0046654">
    <property type="term" value="P:tetrahydrofolate biosynthetic process"/>
    <property type="evidence" value="ECO:0007669"/>
    <property type="project" value="UniProtKB-UniPathway"/>
</dbReference>
<dbReference type="CDD" id="cd00209">
    <property type="entry name" value="DHFR"/>
    <property type="match status" value="1"/>
</dbReference>
<dbReference type="Gene3D" id="3.40.430.10">
    <property type="entry name" value="Dihydrofolate Reductase, subunit A"/>
    <property type="match status" value="1"/>
</dbReference>
<dbReference type="InterPro" id="IPR012259">
    <property type="entry name" value="DHFR"/>
</dbReference>
<dbReference type="InterPro" id="IPR024072">
    <property type="entry name" value="DHFR-like_dom_sf"/>
</dbReference>
<dbReference type="InterPro" id="IPR017925">
    <property type="entry name" value="DHFR_CS"/>
</dbReference>
<dbReference type="InterPro" id="IPR001796">
    <property type="entry name" value="DHFR_dom"/>
</dbReference>
<dbReference type="NCBIfam" id="NF000126">
    <property type="entry name" value="trim_DfrA8"/>
    <property type="match status" value="1"/>
</dbReference>
<dbReference type="PANTHER" id="PTHR48069">
    <property type="entry name" value="DIHYDROFOLATE REDUCTASE"/>
    <property type="match status" value="1"/>
</dbReference>
<dbReference type="PANTHER" id="PTHR48069:SF3">
    <property type="entry name" value="DIHYDROFOLATE REDUCTASE"/>
    <property type="match status" value="1"/>
</dbReference>
<dbReference type="Pfam" id="PF00186">
    <property type="entry name" value="DHFR_1"/>
    <property type="match status" value="1"/>
</dbReference>
<dbReference type="PRINTS" id="PR00070">
    <property type="entry name" value="DHFR"/>
</dbReference>
<dbReference type="SUPFAM" id="SSF53597">
    <property type="entry name" value="Dihydrofolate reductase-like"/>
    <property type="match status" value="1"/>
</dbReference>
<dbReference type="PROSITE" id="PS00075">
    <property type="entry name" value="DHFR_1"/>
    <property type="match status" value="1"/>
</dbReference>
<dbReference type="PROSITE" id="PS51330">
    <property type="entry name" value="DHFR_2"/>
    <property type="match status" value="1"/>
</dbReference>
<reference key="1">
    <citation type="journal article" date="1995" name="Gene">
        <title>A new dhfrVIII trimethoprim-resistance gene, flanked by IS26, whose product is remote from other dihydrofolate reductases in parsimony analysis.</title>
        <authorList>
            <person name="Sundstroem L."/>
            <person name="Jansson C."/>
            <person name="Bremer K."/>
            <person name="Heikkila E."/>
            <person name="Olsson-Liljequist B."/>
            <person name="Skoeld O."/>
        </authorList>
    </citation>
    <scope>NUCLEOTIDE SEQUENCE [GENOMIC DNA]</scope>
</reference>
<sequence>MIELHAILAATANGCIGKDNALPWPPLKGDLARFKKLTMGKVVIMGRKTYESLPVKLEGRTCIVMTRQALELPGVRDANGAIFVNNVSDAMRFAQEESVGDVAYVIGGAEIFKRLALMITQIELTFVKRLYEGDTYVDLAEMVKDYEQNGMEEHDLHTYFTYRKKELTE</sequence>
<geneLocation type="plasmid">
    <name>pLMO226</name>
</geneLocation>
<organism>
    <name type="scientific">Escherichia coli</name>
    <dbReference type="NCBI Taxonomy" id="562"/>
    <lineage>
        <taxon>Bacteria</taxon>
        <taxon>Pseudomonadati</taxon>
        <taxon>Pseudomonadota</taxon>
        <taxon>Gammaproteobacteria</taxon>
        <taxon>Enterobacterales</taxon>
        <taxon>Enterobacteriaceae</taxon>
        <taxon>Escherichia</taxon>
    </lineage>
</organism>
<keyword id="KW-0046">Antibiotic resistance</keyword>
<keyword id="KW-0487">Methotrexate resistance</keyword>
<keyword id="KW-0521">NADP</keyword>
<keyword id="KW-0554">One-carbon metabolism</keyword>
<keyword id="KW-0560">Oxidoreductase</keyword>
<keyword id="KW-0614">Plasmid</keyword>
<keyword id="KW-0817">Trimethoprim resistance</keyword>
<comment type="function">
    <text evidence="1">Key enzyme in folate metabolism. Catalyzes an essential reaction for de novo glycine and purine synthesis, and for DNA precursor synthesis (By similarity).</text>
</comment>
<comment type="catalytic activity">
    <reaction evidence="2">
        <text>(6S)-5,6,7,8-tetrahydrofolate + NADP(+) = 7,8-dihydrofolate + NADPH + H(+)</text>
        <dbReference type="Rhea" id="RHEA:15009"/>
        <dbReference type="ChEBI" id="CHEBI:15378"/>
        <dbReference type="ChEBI" id="CHEBI:57451"/>
        <dbReference type="ChEBI" id="CHEBI:57453"/>
        <dbReference type="ChEBI" id="CHEBI:57783"/>
        <dbReference type="ChEBI" id="CHEBI:58349"/>
        <dbReference type="EC" id="1.5.1.3"/>
    </reaction>
</comment>
<comment type="pathway">
    <text>Cofactor biosynthesis; tetrahydrofolate biosynthesis; 5,6,7,8-tetrahydrofolate from 7,8-dihydrofolate: step 1/1.</text>
</comment>
<comment type="subunit">
    <text evidence="1">Homodimer.</text>
</comment>
<comment type="miscellaneous">
    <text>Confers high-level trimethoprim resistance.</text>
</comment>
<comment type="similarity">
    <text evidence="3">Belongs to the dihydrofolate reductase family.</text>
</comment>
<feature type="chain" id="PRO_0000186425" description="Dihydrofolate reductase type 8">
    <location>
        <begin position="1"/>
        <end position="169"/>
    </location>
</feature>
<feature type="domain" description="DHFR" evidence="2">
    <location>
        <begin position="3"/>
        <end position="169"/>
    </location>
</feature>
<proteinExistence type="inferred from homology"/>
<name>DYR8_ECOLX</name>
<gene>
    <name type="primary">dhfrVIII</name>
    <name type="synonym">dhfrIIIc</name>
</gene>
<protein>
    <recommendedName>
        <fullName>Dihydrofolate reductase type 8</fullName>
        <ecNumber>1.5.1.3</ecNumber>
    </recommendedName>
    <alternativeName>
        <fullName>DHFR type IIIC</fullName>
    </alternativeName>
    <alternativeName>
        <fullName>Dihydrofolate reductase type VIII</fullName>
    </alternativeName>
</protein>
<accession>P0ABQ7</accession>
<accession>Q57452</accession>
<evidence type="ECO:0000250" key="1"/>
<evidence type="ECO:0000255" key="2">
    <source>
        <dbReference type="PROSITE-ProRule" id="PRU00660"/>
    </source>
</evidence>
<evidence type="ECO:0000305" key="3"/>